<feature type="chain" id="PRO_0000175056" description="Thymidine kinase">
    <location>
        <begin position="1"/>
        <end position="197"/>
    </location>
</feature>
<feature type="active site" description="Proton acceptor" evidence="1">
    <location>
        <position position="94"/>
    </location>
</feature>
<feature type="binding site" evidence="1">
    <location>
        <begin position="15"/>
        <end position="22"/>
    </location>
    <ligand>
        <name>ATP</name>
        <dbReference type="ChEBI" id="CHEBI:30616"/>
    </ligand>
</feature>
<feature type="binding site" evidence="1">
    <location>
        <begin position="93"/>
        <end position="96"/>
    </location>
    <ligand>
        <name>ATP</name>
        <dbReference type="ChEBI" id="CHEBI:30616"/>
    </ligand>
</feature>
<feature type="binding site" evidence="1">
    <location>
        <position position="150"/>
    </location>
    <ligand>
        <name>Zn(2+)</name>
        <dbReference type="ChEBI" id="CHEBI:29105"/>
    </ligand>
</feature>
<feature type="binding site" evidence="1">
    <location>
        <position position="153"/>
    </location>
    <ligand>
        <name>Zn(2+)</name>
        <dbReference type="ChEBI" id="CHEBI:29105"/>
    </ligand>
</feature>
<feature type="binding site" evidence="1">
    <location>
        <position position="188"/>
    </location>
    <ligand>
        <name>Zn(2+)</name>
        <dbReference type="ChEBI" id="CHEBI:29105"/>
    </ligand>
</feature>
<feature type="binding site" evidence="1">
    <location>
        <position position="191"/>
    </location>
    <ligand>
        <name>Zn(2+)</name>
        <dbReference type="ChEBI" id="CHEBI:29105"/>
    </ligand>
</feature>
<gene>
    <name evidence="1" type="primary">tdk</name>
    <name type="ordered locus">TK1318</name>
</gene>
<proteinExistence type="inferred from homology"/>
<evidence type="ECO:0000255" key="1">
    <source>
        <dbReference type="HAMAP-Rule" id="MF_00124"/>
    </source>
</evidence>
<comment type="catalytic activity">
    <reaction evidence="1">
        <text>thymidine + ATP = dTMP + ADP + H(+)</text>
        <dbReference type="Rhea" id="RHEA:19129"/>
        <dbReference type="ChEBI" id="CHEBI:15378"/>
        <dbReference type="ChEBI" id="CHEBI:17748"/>
        <dbReference type="ChEBI" id="CHEBI:30616"/>
        <dbReference type="ChEBI" id="CHEBI:63528"/>
        <dbReference type="ChEBI" id="CHEBI:456216"/>
        <dbReference type="EC" id="2.7.1.21"/>
    </reaction>
</comment>
<comment type="subunit">
    <text evidence="1">Homotetramer.</text>
</comment>
<comment type="subcellular location">
    <subcellularLocation>
        <location evidence="1">Cytoplasm</location>
    </subcellularLocation>
</comment>
<comment type="similarity">
    <text evidence="1">Belongs to the thymidine kinase family.</text>
</comment>
<name>KITH_THEKO</name>
<sequence>MKPMHPGGFLEVITGPMFAGKTTELIKRVERQIFAKRKAALFKPAIDNRYSEREVVAHNGLRYEAFVVPTTEKGVERIKEITLNEGYEVIGIDEVQFFPMSVVEALNELADQGIYVIASGLNLDFKGDPFPVTKELLVRADNIVYLTAVCTVCGKPATRSQRLIDGKPAPRNSPVILVGGRESYEARCREHHLVPDE</sequence>
<accession>Q5JGT7</accession>
<organism>
    <name type="scientific">Thermococcus kodakarensis (strain ATCC BAA-918 / JCM 12380 / KOD1)</name>
    <name type="common">Pyrococcus kodakaraensis (strain KOD1)</name>
    <dbReference type="NCBI Taxonomy" id="69014"/>
    <lineage>
        <taxon>Archaea</taxon>
        <taxon>Methanobacteriati</taxon>
        <taxon>Methanobacteriota</taxon>
        <taxon>Thermococci</taxon>
        <taxon>Thermococcales</taxon>
        <taxon>Thermococcaceae</taxon>
        <taxon>Thermococcus</taxon>
    </lineage>
</organism>
<protein>
    <recommendedName>
        <fullName evidence="1">Thymidine kinase</fullName>
        <ecNumber evidence="1">2.7.1.21</ecNumber>
    </recommendedName>
</protein>
<reference key="1">
    <citation type="journal article" date="2005" name="Genome Res.">
        <title>Complete genome sequence of the hyperthermophilic archaeon Thermococcus kodakaraensis KOD1 and comparison with Pyrococcus genomes.</title>
        <authorList>
            <person name="Fukui T."/>
            <person name="Atomi H."/>
            <person name="Kanai T."/>
            <person name="Matsumi R."/>
            <person name="Fujiwara S."/>
            <person name="Imanaka T."/>
        </authorList>
    </citation>
    <scope>NUCLEOTIDE SEQUENCE [LARGE SCALE GENOMIC DNA]</scope>
    <source>
        <strain>ATCC BAA-918 / JCM 12380 / KOD1</strain>
    </source>
</reference>
<keyword id="KW-0067">ATP-binding</keyword>
<keyword id="KW-0963">Cytoplasm</keyword>
<keyword id="KW-0237">DNA synthesis</keyword>
<keyword id="KW-0418">Kinase</keyword>
<keyword id="KW-0479">Metal-binding</keyword>
<keyword id="KW-0547">Nucleotide-binding</keyword>
<keyword id="KW-1185">Reference proteome</keyword>
<keyword id="KW-0808">Transferase</keyword>
<keyword id="KW-0862">Zinc</keyword>
<dbReference type="EC" id="2.7.1.21" evidence="1"/>
<dbReference type="EMBL" id="AP006878">
    <property type="protein sequence ID" value="BAD85507.1"/>
    <property type="molecule type" value="Genomic_DNA"/>
</dbReference>
<dbReference type="SMR" id="Q5JGT7"/>
<dbReference type="STRING" id="69014.TK1318"/>
<dbReference type="EnsemblBacteria" id="BAD85507">
    <property type="protein sequence ID" value="BAD85507"/>
    <property type="gene ID" value="TK1318"/>
</dbReference>
<dbReference type="KEGG" id="tko:TK1318"/>
<dbReference type="PATRIC" id="fig|69014.16.peg.1290"/>
<dbReference type="eggNOG" id="arCOG04798">
    <property type="taxonomic scope" value="Archaea"/>
</dbReference>
<dbReference type="HOGENOM" id="CLU_064400_3_0_2"/>
<dbReference type="InParanoid" id="Q5JGT7"/>
<dbReference type="PhylomeDB" id="Q5JGT7"/>
<dbReference type="Proteomes" id="UP000000536">
    <property type="component" value="Chromosome"/>
</dbReference>
<dbReference type="GO" id="GO:0005737">
    <property type="term" value="C:cytoplasm"/>
    <property type="evidence" value="ECO:0007669"/>
    <property type="project" value="UniProtKB-SubCell"/>
</dbReference>
<dbReference type="GO" id="GO:0005524">
    <property type="term" value="F:ATP binding"/>
    <property type="evidence" value="ECO:0007669"/>
    <property type="project" value="UniProtKB-UniRule"/>
</dbReference>
<dbReference type="GO" id="GO:0004797">
    <property type="term" value="F:thymidine kinase activity"/>
    <property type="evidence" value="ECO:0000318"/>
    <property type="project" value="GO_Central"/>
</dbReference>
<dbReference type="GO" id="GO:0008270">
    <property type="term" value="F:zinc ion binding"/>
    <property type="evidence" value="ECO:0007669"/>
    <property type="project" value="UniProtKB-UniRule"/>
</dbReference>
<dbReference type="GO" id="GO:0071897">
    <property type="term" value="P:DNA biosynthetic process"/>
    <property type="evidence" value="ECO:0007669"/>
    <property type="project" value="UniProtKB-KW"/>
</dbReference>
<dbReference type="GO" id="GO:0046104">
    <property type="term" value="P:thymidine metabolic process"/>
    <property type="evidence" value="ECO:0000318"/>
    <property type="project" value="GO_Central"/>
</dbReference>
<dbReference type="FunFam" id="3.30.60.20:FF:000026">
    <property type="entry name" value="Thymidine kinase"/>
    <property type="match status" value="1"/>
</dbReference>
<dbReference type="FunFam" id="3.40.50.300:FF:001270">
    <property type="entry name" value="Thymidine kinase"/>
    <property type="match status" value="1"/>
</dbReference>
<dbReference type="Gene3D" id="3.30.60.20">
    <property type="match status" value="1"/>
</dbReference>
<dbReference type="Gene3D" id="3.40.50.300">
    <property type="entry name" value="P-loop containing nucleotide triphosphate hydrolases"/>
    <property type="match status" value="1"/>
</dbReference>
<dbReference type="HAMAP" id="MF_00124">
    <property type="entry name" value="Thymidine_kinase"/>
    <property type="match status" value="1"/>
</dbReference>
<dbReference type="InterPro" id="IPR027417">
    <property type="entry name" value="P-loop_NTPase"/>
</dbReference>
<dbReference type="InterPro" id="IPR001267">
    <property type="entry name" value="Thymidine_kinase"/>
</dbReference>
<dbReference type="InterPro" id="IPR020633">
    <property type="entry name" value="Thymidine_kinase_CS"/>
</dbReference>
<dbReference type="NCBIfam" id="NF003296">
    <property type="entry name" value="PRK04296.1-1"/>
    <property type="match status" value="1"/>
</dbReference>
<dbReference type="PANTHER" id="PTHR11441">
    <property type="entry name" value="THYMIDINE KINASE"/>
    <property type="match status" value="1"/>
</dbReference>
<dbReference type="PANTHER" id="PTHR11441:SF0">
    <property type="entry name" value="THYMIDINE KINASE, CYTOSOLIC"/>
    <property type="match status" value="1"/>
</dbReference>
<dbReference type="Pfam" id="PF00265">
    <property type="entry name" value="TK"/>
    <property type="match status" value="1"/>
</dbReference>
<dbReference type="PIRSF" id="PIRSF035805">
    <property type="entry name" value="TK_cell"/>
    <property type="match status" value="1"/>
</dbReference>
<dbReference type="SUPFAM" id="SSF57716">
    <property type="entry name" value="Glucocorticoid receptor-like (DNA-binding domain)"/>
    <property type="match status" value="1"/>
</dbReference>
<dbReference type="SUPFAM" id="SSF52540">
    <property type="entry name" value="P-loop containing nucleoside triphosphate hydrolases"/>
    <property type="match status" value="1"/>
</dbReference>
<dbReference type="PROSITE" id="PS00603">
    <property type="entry name" value="TK_CELLULAR_TYPE"/>
    <property type="match status" value="1"/>
</dbReference>